<feature type="chain" id="PRO_0000372759" description="UPF0741 protein SE_0364">
    <location>
        <begin position="1"/>
        <end position="113"/>
    </location>
</feature>
<feature type="region of interest" description="Disordered" evidence="2">
    <location>
        <begin position="68"/>
        <end position="113"/>
    </location>
</feature>
<feature type="coiled-coil region" evidence="1">
    <location>
        <begin position="78"/>
        <end position="113"/>
    </location>
</feature>
<feature type="compositionally biased region" description="Basic and acidic residues" evidence="2">
    <location>
        <begin position="68"/>
        <end position="102"/>
    </location>
</feature>
<feature type="compositionally biased region" description="Basic residues" evidence="2">
    <location>
        <begin position="103"/>
        <end position="113"/>
    </location>
</feature>
<protein>
    <recommendedName>
        <fullName evidence="1">UPF0741 protein SE_0364</fullName>
    </recommendedName>
</protein>
<evidence type="ECO:0000255" key="1">
    <source>
        <dbReference type="HAMAP-Rule" id="MF_01863"/>
    </source>
</evidence>
<evidence type="ECO:0000256" key="2">
    <source>
        <dbReference type="SAM" id="MobiDB-lite"/>
    </source>
</evidence>
<reference key="1">
    <citation type="journal article" date="2003" name="Mol. Microbiol.">
        <title>Genome-based analysis of virulence genes in a non-biofilm-forming Staphylococcus epidermidis strain (ATCC 12228).</title>
        <authorList>
            <person name="Zhang Y.-Q."/>
            <person name="Ren S.-X."/>
            <person name="Li H.-L."/>
            <person name="Wang Y.-X."/>
            <person name="Fu G."/>
            <person name="Yang J."/>
            <person name="Qin Z.-Q."/>
            <person name="Miao Y.-G."/>
            <person name="Wang W.-Y."/>
            <person name="Chen R.-S."/>
            <person name="Shen Y."/>
            <person name="Chen Z."/>
            <person name="Yuan Z.-H."/>
            <person name="Zhao G.-P."/>
            <person name="Qu D."/>
            <person name="Danchin A."/>
            <person name="Wen Y.-M."/>
        </authorList>
    </citation>
    <scope>NUCLEOTIDE SEQUENCE [LARGE SCALE GENOMIC DNA]</scope>
    <source>
        <strain>ATCC 12228 / FDA PCI 1200</strain>
    </source>
</reference>
<keyword id="KW-0175">Coiled coil</keyword>
<dbReference type="EMBL" id="AE015929">
    <property type="protein sequence ID" value="AAO03961.1"/>
    <property type="molecule type" value="Genomic_DNA"/>
</dbReference>
<dbReference type="RefSeq" id="NP_763919.1">
    <property type="nucleotide sequence ID" value="NC_004461.1"/>
</dbReference>
<dbReference type="RefSeq" id="WP_001832090.1">
    <property type="nucleotide sequence ID" value="NZ_WBME01000026.1"/>
</dbReference>
<dbReference type="SMR" id="Q8CTP9"/>
<dbReference type="KEGG" id="sep:SE_0364"/>
<dbReference type="PATRIC" id="fig|176280.10.peg.339"/>
<dbReference type="eggNOG" id="COG4844">
    <property type="taxonomic scope" value="Bacteria"/>
</dbReference>
<dbReference type="HOGENOM" id="CLU_2156795_0_0_9"/>
<dbReference type="OrthoDB" id="1645211at2"/>
<dbReference type="Proteomes" id="UP000001411">
    <property type="component" value="Chromosome"/>
</dbReference>
<dbReference type="HAMAP" id="MF_01863">
    <property type="entry name" value="UPF0741"/>
    <property type="match status" value="1"/>
</dbReference>
<dbReference type="InterPro" id="IPR009910">
    <property type="entry name" value="DUF1450"/>
</dbReference>
<dbReference type="InterPro" id="IPR020880">
    <property type="entry name" value="UPF0741"/>
</dbReference>
<dbReference type="Pfam" id="PF07293">
    <property type="entry name" value="DUF1450"/>
    <property type="match status" value="1"/>
</dbReference>
<organism>
    <name type="scientific">Staphylococcus epidermidis (strain ATCC 12228 / FDA PCI 1200)</name>
    <dbReference type="NCBI Taxonomy" id="176280"/>
    <lineage>
        <taxon>Bacteria</taxon>
        <taxon>Bacillati</taxon>
        <taxon>Bacillota</taxon>
        <taxon>Bacilli</taxon>
        <taxon>Bacillales</taxon>
        <taxon>Staphylococcaceae</taxon>
        <taxon>Staphylococcus</taxon>
    </lineage>
</organism>
<comment type="similarity">
    <text evidence="1">Belongs to the UPF0741 family.</text>
</comment>
<gene>
    <name type="ordered locus">SE_0364</name>
</gene>
<sequence>MKNKFLICDECQAVNLKSLKRKLEKLDPEAEIEIGCQSYCGPGRRKTFAFVNNRPLAALTEEELMEKVTKQLKKPRDPEEEERLRKRNEERKRRKEEQDRKLKEKLKKRKAEK</sequence>
<name>Y364_STAES</name>
<proteinExistence type="inferred from homology"/>
<accession>Q8CTP9</accession>